<keyword id="KW-1185">Reference proteome</keyword>
<proteinExistence type="inferred from homology"/>
<dbReference type="EMBL" id="AE009951">
    <property type="protein sequence ID" value="AAL93690.1"/>
    <property type="molecule type" value="Genomic_DNA"/>
</dbReference>
<dbReference type="RefSeq" id="NP_602391.1">
    <property type="nucleotide sequence ID" value="NC_003454.1"/>
</dbReference>
<dbReference type="RefSeq" id="WP_011015678.1">
    <property type="nucleotide sequence ID" value="NZ_OZ209243.1"/>
</dbReference>
<dbReference type="SMR" id="Q8RIL3"/>
<dbReference type="STRING" id="190304.FN1575"/>
<dbReference type="PaxDb" id="190304-FN1575"/>
<dbReference type="EnsemblBacteria" id="AAL93690">
    <property type="protein sequence ID" value="AAL93690"/>
    <property type="gene ID" value="FN1575"/>
</dbReference>
<dbReference type="KEGG" id="fnu:FN1575"/>
<dbReference type="PATRIC" id="fig|190304.8.peg.67"/>
<dbReference type="eggNOG" id="COG2827">
    <property type="taxonomic scope" value="Bacteria"/>
</dbReference>
<dbReference type="HOGENOM" id="CLU_135650_0_3_0"/>
<dbReference type="InParanoid" id="Q8RIL3"/>
<dbReference type="BioCyc" id="FNUC190304:G1FZS-79-MONOMER"/>
<dbReference type="Proteomes" id="UP000002521">
    <property type="component" value="Chromosome"/>
</dbReference>
<dbReference type="CDD" id="cd10456">
    <property type="entry name" value="GIY-YIG_UPF0213"/>
    <property type="match status" value="1"/>
</dbReference>
<dbReference type="Gene3D" id="3.40.1440.10">
    <property type="entry name" value="GIY-YIG endonuclease"/>
    <property type="match status" value="1"/>
</dbReference>
<dbReference type="InterPro" id="IPR000305">
    <property type="entry name" value="GIY-YIG_endonuc"/>
</dbReference>
<dbReference type="InterPro" id="IPR035901">
    <property type="entry name" value="GIY-YIG_endonuc_sf"/>
</dbReference>
<dbReference type="InterPro" id="IPR050190">
    <property type="entry name" value="UPF0213_domain"/>
</dbReference>
<dbReference type="PANTHER" id="PTHR34477">
    <property type="entry name" value="UPF0213 PROTEIN YHBQ"/>
    <property type="match status" value="1"/>
</dbReference>
<dbReference type="PANTHER" id="PTHR34477:SF1">
    <property type="entry name" value="UPF0213 PROTEIN YHBQ"/>
    <property type="match status" value="1"/>
</dbReference>
<dbReference type="Pfam" id="PF01541">
    <property type="entry name" value="GIY-YIG"/>
    <property type="match status" value="1"/>
</dbReference>
<dbReference type="SUPFAM" id="SSF82771">
    <property type="entry name" value="GIY-YIG endonuclease"/>
    <property type="match status" value="1"/>
</dbReference>
<dbReference type="PROSITE" id="PS50164">
    <property type="entry name" value="GIY_YIG"/>
    <property type="match status" value="1"/>
</dbReference>
<evidence type="ECO:0000255" key="1">
    <source>
        <dbReference type="PROSITE-ProRule" id="PRU00977"/>
    </source>
</evidence>
<evidence type="ECO:0000305" key="2"/>
<comment type="similarity">
    <text evidence="2">Belongs to the UPF0213 family.</text>
</comment>
<name>Y1575_FUSNN</name>
<sequence>MAYYLYMLRCEDGSIYTGVAKDYLKRYEEHLSAKGAKYTKSHKVVKIERVFLCDSRSIACSLESEIKKYIKKKKENIISKPDSFIKDIENVRKIKIKKIF</sequence>
<accession>Q8RIL3</accession>
<gene>
    <name type="ordered locus">FN1575</name>
</gene>
<reference key="1">
    <citation type="journal article" date="2002" name="J. Bacteriol.">
        <title>Genome sequence and analysis of the oral bacterium Fusobacterium nucleatum strain ATCC 25586.</title>
        <authorList>
            <person name="Kapatral V."/>
            <person name="Anderson I."/>
            <person name="Ivanova N."/>
            <person name="Reznik G."/>
            <person name="Los T."/>
            <person name="Lykidis A."/>
            <person name="Bhattacharyya A."/>
            <person name="Bartman A."/>
            <person name="Gardner W."/>
            <person name="Grechkin G."/>
            <person name="Zhu L."/>
            <person name="Vasieva O."/>
            <person name="Chu L."/>
            <person name="Kogan Y."/>
            <person name="Chaga O."/>
            <person name="Goltsman E."/>
            <person name="Bernal A."/>
            <person name="Larsen N."/>
            <person name="D'Souza M."/>
            <person name="Walunas T."/>
            <person name="Pusch G."/>
            <person name="Haselkorn R."/>
            <person name="Fonstein M."/>
            <person name="Kyrpides N.C."/>
            <person name="Overbeek R."/>
        </authorList>
    </citation>
    <scope>NUCLEOTIDE SEQUENCE [LARGE SCALE GENOMIC DNA]</scope>
    <source>
        <strain>ATCC 25586 / DSM 15643 / BCRC 10681 / CIP 101130 / JCM 8532 / KCTC 2640 / LMG 13131 / VPI 4355</strain>
    </source>
</reference>
<feature type="chain" id="PRO_0000161363" description="UPF0213 protein FN1575">
    <location>
        <begin position="1"/>
        <end position="100"/>
    </location>
</feature>
<feature type="domain" description="GIY-YIG" evidence="1">
    <location>
        <begin position="1"/>
        <end position="77"/>
    </location>
</feature>
<organism>
    <name type="scientific">Fusobacterium nucleatum subsp. nucleatum (strain ATCC 25586 / DSM 15643 / BCRC 10681 / CIP 101130 / JCM 8532 / KCTC 2640 / LMG 13131 / VPI 4355)</name>
    <dbReference type="NCBI Taxonomy" id="190304"/>
    <lineage>
        <taxon>Bacteria</taxon>
        <taxon>Fusobacteriati</taxon>
        <taxon>Fusobacteriota</taxon>
        <taxon>Fusobacteriia</taxon>
        <taxon>Fusobacteriales</taxon>
        <taxon>Fusobacteriaceae</taxon>
        <taxon>Fusobacterium</taxon>
    </lineage>
</organism>
<protein>
    <recommendedName>
        <fullName>UPF0213 protein FN1575</fullName>
    </recommendedName>
</protein>